<keyword id="KW-0325">Glycoprotein</keyword>
<keyword id="KW-0378">Hydrolase</keyword>
<keyword id="KW-0442">Lipid degradation</keyword>
<keyword id="KW-0443">Lipid metabolism</keyword>
<keyword id="KW-1185">Reference proteome</keyword>
<keyword id="KW-0964">Secreted</keyword>
<keyword id="KW-0732">Signal</keyword>
<dbReference type="EC" id="3.1.1.-"/>
<dbReference type="EMBL" id="FO081806">
    <property type="protein sequence ID" value="CCD73828.1"/>
    <property type="molecule type" value="Genomic_DNA"/>
</dbReference>
<dbReference type="RefSeq" id="NP_497570.1">
    <property type="nucleotide sequence ID" value="NM_065169.7"/>
</dbReference>
<dbReference type="SMR" id="Q9BL07"/>
<dbReference type="BioGRID" id="40617">
    <property type="interactions" value="3"/>
</dbReference>
<dbReference type="FunCoup" id="Q9BL07">
    <property type="interactions" value="503"/>
</dbReference>
<dbReference type="STRING" id="6239.Y54F10AM.8.1"/>
<dbReference type="iPTMnet" id="Q9BL07"/>
<dbReference type="PaxDb" id="6239-Y54F10AM.8"/>
<dbReference type="PeptideAtlas" id="Q9BL07"/>
<dbReference type="EnsemblMetazoa" id="Y54F10AM.8.1">
    <property type="protein sequence ID" value="Y54F10AM.8.1"/>
    <property type="gene ID" value="WBGene00021852"/>
</dbReference>
<dbReference type="GeneID" id="175369"/>
<dbReference type="KEGG" id="cel:CELE_Y54F10AM.8"/>
<dbReference type="UCSC" id="Y54F10AM.8.1">
    <property type="organism name" value="c. elegans"/>
</dbReference>
<dbReference type="AGR" id="WB:WBGene00021852"/>
<dbReference type="CTD" id="175369"/>
<dbReference type="WormBase" id="Y54F10AM.8">
    <property type="protein sequence ID" value="CE27290"/>
    <property type="gene ID" value="WBGene00021852"/>
</dbReference>
<dbReference type="eggNOG" id="KOG3774">
    <property type="taxonomic scope" value="Eukaryota"/>
</dbReference>
<dbReference type="GeneTree" id="ENSGT00530000063509"/>
<dbReference type="HOGENOM" id="CLU_027106_4_0_1"/>
<dbReference type="InParanoid" id="Q9BL07"/>
<dbReference type="OMA" id="LQIYYHY"/>
<dbReference type="OrthoDB" id="443524at2759"/>
<dbReference type="PhylomeDB" id="Q9BL07"/>
<dbReference type="PRO" id="PR:Q9BL07"/>
<dbReference type="Proteomes" id="UP000001940">
    <property type="component" value="Chromosome III"/>
</dbReference>
<dbReference type="Bgee" id="WBGene00021852">
    <property type="expression patterns" value="Expressed in larva and 4 other cell types or tissues"/>
</dbReference>
<dbReference type="GO" id="GO:0005576">
    <property type="term" value="C:extracellular region"/>
    <property type="evidence" value="ECO:0000318"/>
    <property type="project" value="GO_Central"/>
</dbReference>
<dbReference type="GO" id="GO:0004620">
    <property type="term" value="F:phospholipase activity"/>
    <property type="evidence" value="ECO:0000318"/>
    <property type="project" value="GO_Central"/>
</dbReference>
<dbReference type="GO" id="GO:0009395">
    <property type="term" value="P:phospholipid catabolic process"/>
    <property type="evidence" value="ECO:0000318"/>
    <property type="project" value="GO_Central"/>
</dbReference>
<dbReference type="Gene3D" id="3.60.60.30">
    <property type="match status" value="1"/>
</dbReference>
<dbReference type="InterPro" id="IPR007000">
    <property type="entry name" value="PLipase_B-like"/>
</dbReference>
<dbReference type="PANTHER" id="PTHR12370:SF8">
    <property type="entry name" value="PHOSPHOLIPASE B-LIKE 3-RELATED"/>
    <property type="match status" value="1"/>
</dbReference>
<dbReference type="PANTHER" id="PTHR12370">
    <property type="entry name" value="PHOSPHOLIPASE B-RELATED"/>
    <property type="match status" value="1"/>
</dbReference>
<dbReference type="Pfam" id="PF04916">
    <property type="entry name" value="Phospholip_B"/>
    <property type="match status" value="1"/>
</dbReference>
<evidence type="ECO:0000250" key="1"/>
<evidence type="ECO:0000255" key="2"/>
<evidence type="ECO:0000269" key="3">
    <source>
    </source>
</evidence>
<evidence type="ECO:0000305" key="4"/>
<feature type="signal peptide" evidence="2">
    <location>
        <begin position="1"/>
        <end position="16"/>
    </location>
</feature>
<feature type="chain" id="PRO_0000286115" description="Putative phospholipase B-like 3">
    <location>
        <begin position="17"/>
        <end position="581"/>
    </location>
</feature>
<feature type="glycosylation site" description="N-linked (GlcNAc...) asparagine" evidence="2">
    <location>
        <position position="50"/>
    </location>
</feature>
<feature type="glycosylation site" description="N-linked (GlcNAc...) asparagine" evidence="2">
    <location>
        <position position="82"/>
    </location>
</feature>
<feature type="glycosylation site" description="N-linked (GlcNAc...) asparagine" evidence="2">
    <location>
        <position position="132"/>
    </location>
</feature>
<feature type="glycosylation site" description="N-linked (GlcNAc...) asparagine" evidence="2">
    <location>
        <position position="169"/>
    </location>
</feature>
<feature type="glycosylation site" description="N-linked (GlcNAc...) asparagine" evidence="2">
    <location>
        <position position="215"/>
    </location>
</feature>
<feature type="glycosylation site" description="N-linked (GlcNAc...) asparagine" evidence="2">
    <location>
        <position position="309"/>
    </location>
</feature>
<feature type="glycosylation site" description="N-linked (GlcNAc...) asparagine" evidence="2">
    <location>
        <position position="543"/>
    </location>
</feature>
<feature type="glycosylation site" description="N-linked (GlcNAc...) asparagine" evidence="3">
    <location>
        <position position="546"/>
    </location>
</feature>
<feature type="glycosylation site" description="N-linked (GlcNAc...) asparagine" evidence="2">
    <location>
        <position position="560"/>
    </location>
</feature>
<reference key="1">
    <citation type="journal article" date="1998" name="Science">
        <title>Genome sequence of the nematode C. elegans: a platform for investigating biology.</title>
        <authorList>
            <consortium name="The C. elegans sequencing consortium"/>
        </authorList>
    </citation>
    <scope>NUCLEOTIDE SEQUENCE [LARGE SCALE GENOMIC DNA]</scope>
    <source>
        <strain>Bristol N2</strain>
    </source>
</reference>
<reference key="2">
    <citation type="journal article" date="2007" name="Mol. Cell. Proteomics">
        <title>Proteomics reveals N-linked glycoprotein diversity in Caenorhabditis elegans and suggests an atypical translocation mechanism for integral membrane proteins.</title>
        <authorList>
            <person name="Kaji H."/>
            <person name="Kamiie J."/>
            <person name="Kawakami H."/>
            <person name="Kido K."/>
            <person name="Yamauchi Y."/>
            <person name="Shinkawa T."/>
            <person name="Taoka M."/>
            <person name="Takahashi N."/>
            <person name="Isobe T."/>
        </authorList>
    </citation>
    <scope>GLYCOSYLATION [LARGE SCALE ANALYSIS] AT ASN-546</scope>
    <scope>IDENTIFICATION BY MASS SPECTROMETRY</scope>
    <source>
        <strain>Bristol N2</strain>
    </source>
</reference>
<accession>Q9BL07</accession>
<protein>
    <recommendedName>
        <fullName>Putative phospholipase B-like 3</fullName>
        <ecNumber>3.1.1.-</ecNumber>
    </recommendedName>
    <alternativeName>
        <fullName>LAMA-like protein 3</fullName>
    </alternativeName>
    <alternativeName>
        <fullName>Lamina ancestor homolog 3</fullName>
    </alternativeName>
</protein>
<organism>
    <name type="scientific">Caenorhabditis elegans</name>
    <dbReference type="NCBI Taxonomy" id="6239"/>
    <lineage>
        <taxon>Eukaryota</taxon>
        <taxon>Metazoa</taxon>
        <taxon>Ecdysozoa</taxon>
        <taxon>Nematoda</taxon>
        <taxon>Chromadorea</taxon>
        <taxon>Rhabditida</taxon>
        <taxon>Rhabditina</taxon>
        <taxon>Rhabditomorpha</taxon>
        <taxon>Rhabditoidea</taxon>
        <taxon>Rhabditidae</taxon>
        <taxon>Peloderinae</taxon>
        <taxon>Caenorhabditis</taxon>
    </lineage>
</organism>
<gene>
    <name type="ORF">Y54F10AM.8</name>
</gene>
<comment type="function">
    <text evidence="1">Putative phospholipase.</text>
</comment>
<comment type="subcellular location">
    <subcellularLocation>
        <location evidence="4">Secreted</location>
    </subcellularLocation>
</comment>
<comment type="similarity">
    <text evidence="4">Belongs to the phospholipase B-like family.</text>
</comment>
<sequence>MKLLFFLFGLIFAVEQEKPYLDNNRVPVEQILNDHSSAKFDYTYVSVCVNSTDETLLDIVYAKECKNAASRVALGKYSNQVNTTGWGILEIETFASHSYDVQAYGAGVAEGELTRLQIYYHYRNTIETMCNNHTLFCKRLYIYLQQNLDWMRSQVQANPPTDPFWRQVNLTFAQLTGIYDAYSKRNLTPEIGFDLHPIYMMQLAGDMFDLNKLLNKTADPMEYPEGGRCSGFVKLAPGNKDMFMAHVSMSSLSWMQRVLKIYKFGYDVNEVPGHIVTFSGYPGVLISTDDYTITSAGLTSIETTIAIFNQTLYTDKFMKPEGQVHCWIRSMISNLLSRTGKQWVDMFGRYNSGTYNNQWTVLDWKQFTPEKELPDKDVLWISEQTPGYYETRDMTWYLKKYTYFASYNIPFLPKVSEISGFDNKARQFAWFDWGGSPRARIFDRDHSKVTDIDSLTKLMRYNDYTHEEFARCKCTPNPYTGEGGISARGDLNTPGGTYEVESMGFRDHAGLDFKGTNYEMFKKMRFRAWGGPPYDPLPVFDWNHTNLTNVRHFGQPDVWNFTYVDLEWQLAAQVQLTPYDN</sequence>
<name>PLBL3_CAEEL</name>
<proteinExistence type="evidence at protein level"/>